<comment type="subcellular location">
    <subcellularLocation>
        <location evidence="1">Mitochondrion</location>
    </subcellularLocation>
</comment>
<comment type="similarity">
    <text evidence="3">Belongs to the bacterial ribosomal protein bL27 family.</text>
</comment>
<keyword id="KW-0496">Mitochondrion</keyword>
<keyword id="KW-1185">Reference proteome</keyword>
<keyword id="KW-0687">Ribonucleoprotein</keyword>
<keyword id="KW-0689">Ribosomal protein</keyword>
<keyword id="KW-0809">Transit peptide</keyword>
<proteinExistence type="inferred from homology"/>
<protein>
    <recommendedName>
        <fullName evidence="3">Large ribosomal subunit protein bL27m</fullName>
    </recommendedName>
    <alternativeName>
        <fullName>54S ribosomal protein L27, mitochondrial</fullName>
    </alternativeName>
</protein>
<gene>
    <name type="primary">RPL27</name>
    <name type="ordered locus">CNA07010</name>
</gene>
<organism>
    <name type="scientific">Cryptococcus neoformans var. neoformans serotype D (strain JEC21 / ATCC MYA-565)</name>
    <name type="common">Filobasidiella neoformans</name>
    <dbReference type="NCBI Taxonomy" id="214684"/>
    <lineage>
        <taxon>Eukaryota</taxon>
        <taxon>Fungi</taxon>
        <taxon>Dikarya</taxon>
        <taxon>Basidiomycota</taxon>
        <taxon>Agaricomycotina</taxon>
        <taxon>Tremellomycetes</taxon>
        <taxon>Tremellales</taxon>
        <taxon>Cryptococcaceae</taxon>
        <taxon>Cryptococcus</taxon>
        <taxon>Cryptococcus neoformans species complex</taxon>
    </lineage>
</organism>
<sequence>MFLRPTSIPSAVSQIRAQLFAGPSSLASQIQVRWASKAAGGKSKNGRESAGRRLGVKRYGDQYVTPGTIIVRQRGANFHPGQNVAVGKDFTIYALQPGYVKFYQHHLPYPHLSRPDQPGPQNVPSVKRPRQFRQFVGIARDREDKLPRDERAVGRERRFWGWPKEKVEVVPEAAVESAAGIQA</sequence>
<reference key="1">
    <citation type="journal article" date="1995" name="Gene">
        <title>Further analysis of the CAP59 locus of Cryptococcus neoformans: structure defined by forced expression and description of a new ribosomal protein-encoding gene.</title>
        <authorList>
            <person name="Chang Y.C."/>
            <person name="Wickes B.L."/>
            <person name="Kwon-Chung K.J."/>
        </authorList>
    </citation>
    <scope>NUCLEOTIDE SEQUENCE [GENOMIC DNA]</scope>
</reference>
<reference key="2">
    <citation type="journal article" date="2005" name="Science">
        <title>The genome of the basidiomycetous yeast and human pathogen Cryptococcus neoformans.</title>
        <authorList>
            <person name="Loftus B.J."/>
            <person name="Fung E."/>
            <person name="Roncaglia P."/>
            <person name="Rowley D."/>
            <person name="Amedeo P."/>
            <person name="Bruno D."/>
            <person name="Vamathevan J."/>
            <person name="Miranda M."/>
            <person name="Anderson I.J."/>
            <person name="Fraser J.A."/>
            <person name="Allen J.E."/>
            <person name="Bosdet I.E."/>
            <person name="Brent M.R."/>
            <person name="Chiu R."/>
            <person name="Doering T.L."/>
            <person name="Donlin M.J."/>
            <person name="D'Souza C.A."/>
            <person name="Fox D.S."/>
            <person name="Grinberg V."/>
            <person name="Fu J."/>
            <person name="Fukushima M."/>
            <person name="Haas B.J."/>
            <person name="Huang J.C."/>
            <person name="Janbon G."/>
            <person name="Jones S.J.M."/>
            <person name="Koo H.L."/>
            <person name="Krzywinski M.I."/>
            <person name="Kwon-Chung K.J."/>
            <person name="Lengeler K.B."/>
            <person name="Maiti R."/>
            <person name="Marra M.A."/>
            <person name="Marra R.E."/>
            <person name="Mathewson C.A."/>
            <person name="Mitchell T.G."/>
            <person name="Pertea M."/>
            <person name="Riggs F.R."/>
            <person name="Salzberg S.L."/>
            <person name="Schein J.E."/>
            <person name="Shvartsbeyn A."/>
            <person name="Shin H."/>
            <person name="Shumway M."/>
            <person name="Specht C.A."/>
            <person name="Suh B.B."/>
            <person name="Tenney A."/>
            <person name="Utterback T.R."/>
            <person name="Wickes B.L."/>
            <person name="Wortman J.R."/>
            <person name="Wye N.H."/>
            <person name="Kronstad J.W."/>
            <person name="Lodge J.K."/>
            <person name="Heitman J."/>
            <person name="Davis R.W."/>
            <person name="Fraser C.M."/>
            <person name="Hyman R.W."/>
        </authorList>
    </citation>
    <scope>NUCLEOTIDE SEQUENCE [LARGE SCALE GENOMIC DNA]</scope>
    <source>
        <strain>JEC21 / ATCC MYA-565</strain>
    </source>
</reference>
<accession>P0CQ48</accession>
<accession>P46288</accession>
<accession>Q55Z05</accession>
<accession>Q5KNC1</accession>
<evidence type="ECO:0000250" key="1"/>
<evidence type="ECO:0000255" key="2"/>
<evidence type="ECO:0000305" key="3"/>
<dbReference type="EMBL" id="L37877">
    <property type="protein sequence ID" value="AAA97429.1"/>
    <property type="molecule type" value="Genomic_DNA"/>
</dbReference>
<dbReference type="EMBL" id="AE017341">
    <property type="protein sequence ID" value="AAW41199.1"/>
    <property type="molecule type" value="Genomic_DNA"/>
</dbReference>
<dbReference type="PIR" id="JC4568">
    <property type="entry name" value="JC4568"/>
</dbReference>
<dbReference type="RefSeq" id="XP_567018.1">
    <property type="nucleotide sequence ID" value="XM_567018.1"/>
</dbReference>
<dbReference type="SMR" id="P0CQ48"/>
<dbReference type="FunCoup" id="P0CQ48">
    <property type="interactions" value="117"/>
</dbReference>
<dbReference type="STRING" id="214684.P0CQ48"/>
<dbReference type="PaxDb" id="214684-P0CQ48"/>
<dbReference type="EnsemblFungi" id="AAW41199">
    <property type="protein sequence ID" value="AAW41199"/>
    <property type="gene ID" value="CNA07010"/>
</dbReference>
<dbReference type="GeneID" id="3253901"/>
<dbReference type="KEGG" id="cne:CNA07010"/>
<dbReference type="VEuPathDB" id="FungiDB:CNA07010"/>
<dbReference type="eggNOG" id="KOG4600">
    <property type="taxonomic scope" value="Eukaryota"/>
</dbReference>
<dbReference type="HOGENOM" id="CLU_095424_3_3_1"/>
<dbReference type="InParanoid" id="P0CQ48"/>
<dbReference type="OMA" id="GANFHPG"/>
<dbReference type="OrthoDB" id="1867012at2759"/>
<dbReference type="Proteomes" id="UP000002149">
    <property type="component" value="Chromosome 1"/>
</dbReference>
<dbReference type="GO" id="GO:0005762">
    <property type="term" value="C:mitochondrial large ribosomal subunit"/>
    <property type="evidence" value="ECO:0000318"/>
    <property type="project" value="GO_Central"/>
</dbReference>
<dbReference type="GO" id="GO:0003735">
    <property type="term" value="F:structural constituent of ribosome"/>
    <property type="evidence" value="ECO:0000318"/>
    <property type="project" value="GO_Central"/>
</dbReference>
<dbReference type="GO" id="GO:0006412">
    <property type="term" value="P:translation"/>
    <property type="evidence" value="ECO:0007669"/>
    <property type="project" value="InterPro"/>
</dbReference>
<dbReference type="FunFam" id="2.40.50.100:FF:000031">
    <property type="entry name" value="39S ribosomal protein L27, mitochondrial"/>
    <property type="match status" value="1"/>
</dbReference>
<dbReference type="Gene3D" id="2.40.50.100">
    <property type="match status" value="1"/>
</dbReference>
<dbReference type="InterPro" id="IPR001684">
    <property type="entry name" value="Ribosomal_bL27"/>
</dbReference>
<dbReference type="InterPro" id="IPR018261">
    <property type="entry name" value="Ribosomal_bL27_CS"/>
</dbReference>
<dbReference type="NCBIfam" id="TIGR00062">
    <property type="entry name" value="L27"/>
    <property type="match status" value="1"/>
</dbReference>
<dbReference type="PANTHER" id="PTHR15893:SF0">
    <property type="entry name" value="LARGE RIBOSOMAL SUBUNIT PROTEIN BL27M"/>
    <property type="match status" value="1"/>
</dbReference>
<dbReference type="PANTHER" id="PTHR15893">
    <property type="entry name" value="RIBOSOMAL PROTEIN L27"/>
    <property type="match status" value="1"/>
</dbReference>
<dbReference type="Pfam" id="PF01016">
    <property type="entry name" value="Ribosomal_L27"/>
    <property type="match status" value="1"/>
</dbReference>
<dbReference type="PRINTS" id="PR00063">
    <property type="entry name" value="RIBOSOMALL27"/>
</dbReference>
<dbReference type="SUPFAM" id="SSF110324">
    <property type="entry name" value="Ribosomal L27 protein-like"/>
    <property type="match status" value="1"/>
</dbReference>
<dbReference type="PROSITE" id="PS00831">
    <property type="entry name" value="RIBOSOMAL_L27"/>
    <property type="match status" value="1"/>
</dbReference>
<feature type="transit peptide" description="Mitochondrion" evidence="2">
    <location>
        <begin position="1"/>
        <end position="34"/>
    </location>
</feature>
<feature type="chain" id="PRO_0000030496" description="Large ribosomal subunit protein bL27m">
    <location>
        <begin position="35"/>
        <end position="183"/>
    </location>
</feature>
<name>RM27_CRYNJ</name>